<sequence>MGIGRVTQVMGPVIDVRFEHNEVPKINNALVIDVPKEEGTIQLTLEVALQLGDDVVRTIAMDSTDGVQRGMDVKDTGKEISVPVGDETLGRVFNVLGETIDLKEEISDSVRRDPIHRQAPAFDELSTEVQILETGIKVVDLLAPYIKGGKIGLFGGAGVGKTVLIQELINNIAQEHGGISVFAGVGERTREGNDLYFEMSDSGVIKKTAMVFGQMNEPPGARMRVALSGLTMAEYFRDEQGQDVLLFIDNIFRFTQAGSEVSALLGRMPSAVGYQPTLATEMGQLQERITSTTKGSVTSIQAVFVPADDYTDPAPATAFAHLDATTNLERKLTEMGIYPAVDPLASTSRALEPSIVGQEHYEVARDVQSTLQKYRELQDIIAILGMDELSDEDKQTVERARRIQFFLSQNFHVAEQFTGQKGSYVPVKTTVANFKDILDGKYDHIPEDAFRLVGSMDDVIAKAKDMGVEV</sequence>
<keyword id="KW-0066">ATP synthesis</keyword>
<keyword id="KW-0067">ATP-binding</keyword>
<keyword id="KW-1003">Cell membrane</keyword>
<keyword id="KW-0139">CF(1)</keyword>
<keyword id="KW-0375">Hydrogen ion transport</keyword>
<keyword id="KW-0406">Ion transport</keyword>
<keyword id="KW-0472">Membrane</keyword>
<keyword id="KW-0547">Nucleotide-binding</keyword>
<keyword id="KW-1278">Translocase</keyword>
<keyword id="KW-0813">Transport</keyword>
<organism>
    <name type="scientific">Staphylococcus aureus (strain bovine RF122 / ET3-1)</name>
    <dbReference type="NCBI Taxonomy" id="273036"/>
    <lineage>
        <taxon>Bacteria</taxon>
        <taxon>Bacillati</taxon>
        <taxon>Bacillota</taxon>
        <taxon>Bacilli</taxon>
        <taxon>Bacillales</taxon>
        <taxon>Staphylococcaceae</taxon>
        <taxon>Staphylococcus</taxon>
    </lineage>
</organism>
<name>ATPB_STAAB</name>
<feature type="chain" id="PRO_0000254381" description="ATP synthase subunit beta">
    <location>
        <begin position="1"/>
        <end position="470"/>
    </location>
</feature>
<feature type="binding site" evidence="1">
    <location>
        <begin position="155"/>
        <end position="162"/>
    </location>
    <ligand>
        <name>ATP</name>
        <dbReference type="ChEBI" id="CHEBI:30616"/>
    </ligand>
</feature>
<proteinExistence type="inferred from homology"/>
<dbReference type="EC" id="7.1.2.2" evidence="1"/>
<dbReference type="EMBL" id="AJ938182">
    <property type="protein sequence ID" value="CAI81676.1"/>
    <property type="molecule type" value="Genomic_DNA"/>
</dbReference>
<dbReference type="RefSeq" id="WP_000511135.1">
    <property type="nucleotide sequence ID" value="NC_007622.1"/>
</dbReference>
<dbReference type="SMR" id="Q2YUK1"/>
<dbReference type="GeneID" id="98346410"/>
<dbReference type="KEGG" id="sab:SAB1987c"/>
<dbReference type="HOGENOM" id="CLU_022398_0_2_9"/>
<dbReference type="GO" id="GO:0005886">
    <property type="term" value="C:plasma membrane"/>
    <property type="evidence" value="ECO:0007669"/>
    <property type="project" value="UniProtKB-SubCell"/>
</dbReference>
<dbReference type="GO" id="GO:0045259">
    <property type="term" value="C:proton-transporting ATP synthase complex"/>
    <property type="evidence" value="ECO:0007669"/>
    <property type="project" value="UniProtKB-KW"/>
</dbReference>
<dbReference type="GO" id="GO:0005524">
    <property type="term" value="F:ATP binding"/>
    <property type="evidence" value="ECO:0007669"/>
    <property type="project" value="UniProtKB-UniRule"/>
</dbReference>
<dbReference type="GO" id="GO:0016887">
    <property type="term" value="F:ATP hydrolysis activity"/>
    <property type="evidence" value="ECO:0007669"/>
    <property type="project" value="InterPro"/>
</dbReference>
<dbReference type="GO" id="GO:0046933">
    <property type="term" value="F:proton-transporting ATP synthase activity, rotational mechanism"/>
    <property type="evidence" value="ECO:0007669"/>
    <property type="project" value="UniProtKB-UniRule"/>
</dbReference>
<dbReference type="CDD" id="cd18110">
    <property type="entry name" value="ATP-synt_F1_beta_C"/>
    <property type="match status" value="1"/>
</dbReference>
<dbReference type="CDD" id="cd18115">
    <property type="entry name" value="ATP-synt_F1_beta_N"/>
    <property type="match status" value="1"/>
</dbReference>
<dbReference type="CDD" id="cd01133">
    <property type="entry name" value="F1-ATPase_beta_CD"/>
    <property type="match status" value="1"/>
</dbReference>
<dbReference type="FunFam" id="1.10.1140.10:FF:000001">
    <property type="entry name" value="ATP synthase subunit beta"/>
    <property type="match status" value="1"/>
</dbReference>
<dbReference type="FunFam" id="2.40.10.170:FF:000005">
    <property type="entry name" value="ATP synthase subunit beta"/>
    <property type="match status" value="1"/>
</dbReference>
<dbReference type="FunFam" id="3.40.50.300:FF:000004">
    <property type="entry name" value="ATP synthase subunit beta"/>
    <property type="match status" value="1"/>
</dbReference>
<dbReference type="Gene3D" id="2.40.10.170">
    <property type="match status" value="1"/>
</dbReference>
<dbReference type="Gene3D" id="1.10.1140.10">
    <property type="entry name" value="Bovine Mitochondrial F1-atpase, Atp Synthase Beta Chain, Chain D, domain 3"/>
    <property type="match status" value="1"/>
</dbReference>
<dbReference type="Gene3D" id="3.40.50.300">
    <property type="entry name" value="P-loop containing nucleotide triphosphate hydrolases"/>
    <property type="match status" value="1"/>
</dbReference>
<dbReference type="HAMAP" id="MF_01347">
    <property type="entry name" value="ATP_synth_beta_bact"/>
    <property type="match status" value="1"/>
</dbReference>
<dbReference type="InterPro" id="IPR003593">
    <property type="entry name" value="AAA+_ATPase"/>
</dbReference>
<dbReference type="InterPro" id="IPR055190">
    <property type="entry name" value="ATP-synt_VA_C"/>
</dbReference>
<dbReference type="InterPro" id="IPR005722">
    <property type="entry name" value="ATP_synth_F1_bsu"/>
</dbReference>
<dbReference type="InterPro" id="IPR020003">
    <property type="entry name" value="ATPase_a/bsu_AS"/>
</dbReference>
<dbReference type="InterPro" id="IPR050053">
    <property type="entry name" value="ATPase_alpha/beta_chains"/>
</dbReference>
<dbReference type="InterPro" id="IPR004100">
    <property type="entry name" value="ATPase_F1/V1/A1_a/bsu_N"/>
</dbReference>
<dbReference type="InterPro" id="IPR036121">
    <property type="entry name" value="ATPase_F1/V1/A1_a/bsu_N_sf"/>
</dbReference>
<dbReference type="InterPro" id="IPR000194">
    <property type="entry name" value="ATPase_F1/V1/A1_a/bsu_nucl-bd"/>
</dbReference>
<dbReference type="InterPro" id="IPR024034">
    <property type="entry name" value="ATPase_F1/V1_b/a_C"/>
</dbReference>
<dbReference type="InterPro" id="IPR027417">
    <property type="entry name" value="P-loop_NTPase"/>
</dbReference>
<dbReference type="NCBIfam" id="TIGR01039">
    <property type="entry name" value="atpD"/>
    <property type="match status" value="1"/>
</dbReference>
<dbReference type="PANTHER" id="PTHR15184">
    <property type="entry name" value="ATP SYNTHASE"/>
    <property type="match status" value="1"/>
</dbReference>
<dbReference type="PANTHER" id="PTHR15184:SF71">
    <property type="entry name" value="ATP SYNTHASE SUBUNIT BETA, MITOCHONDRIAL"/>
    <property type="match status" value="1"/>
</dbReference>
<dbReference type="Pfam" id="PF00006">
    <property type="entry name" value="ATP-synt_ab"/>
    <property type="match status" value="1"/>
</dbReference>
<dbReference type="Pfam" id="PF02874">
    <property type="entry name" value="ATP-synt_ab_N"/>
    <property type="match status" value="1"/>
</dbReference>
<dbReference type="Pfam" id="PF22919">
    <property type="entry name" value="ATP-synt_VA_C"/>
    <property type="match status" value="1"/>
</dbReference>
<dbReference type="SMART" id="SM00382">
    <property type="entry name" value="AAA"/>
    <property type="match status" value="1"/>
</dbReference>
<dbReference type="SUPFAM" id="SSF47917">
    <property type="entry name" value="C-terminal domain of alpha and beta subunits of F1 ATP synthase"/>
    <property type="match status" value="1"/>
</dbReference>
<dbReference type="SUPFAM" id="SSF50615">
    <property type="entry name" value="N-terminal domain of alpha and beta subunits of F1 ATP synthase"/>
    <property type="match status" value="1"/>
</dbReference>
<dbReference type="SUPFAM" id="SSF52540">
    <property type="entry name" value="P-loop containing nucleoside triphosphate hydrolases"/>
    <property type="match status" value="1"/>
</dbReference>
<dbReference type="PROSITE" id="PS00152">
    <property type="entry name" value="ATPASE_ALPHA_BETA"/>
    <property type="match status" value="1"/>
</dbReference>
<comment type="function">
    <text evidence="1">Produces ATP from ADP in the presence of a proton gradient across the membrane. The catalytic sites are hosted primarily by the beta subunits.</text>
</comment>
<comment type="catalytic activity">
    <reaction evidence="1">
        <text>ATP + H2O + 4 H(+)(in) = ADP + phosphate + 5 H(+)(out)</text>
        <dbReference type="Rhea" id="RHEA:57720"/>
        <dbReference type="ChEBI" id="CHEBI:15377"/>
        <dbReference type="ChEBI" id="CHEBI:15378"/>
        <dbReference type="ChEBI" id="CHEBI:30616"/>
        <dbReference type="ChEBI" id="CHEBI:43474"/>
        <dbReference type="ChEBI" id="CHEBI:456216"/>
        <dbReference type="EC" id="7.1.2.2"/>
    </reaction>
</comment>
<comment type="subunit">
    <text evidence="1">F-type ATPases have 2 components, CF(1) - the catalytic core - and CF(0) - the membrane proton channel. CF(1) has five subunits: alpha(3), beta(3), gamma(1), delta(1), epsilon(1). CF(0) has three main subunits: a(1), b(2) and c(9-12). The alpha and beta chains form an alternating ring which encloses part of the gamma chain. CF(1) is attached to CF(0) by a central stalk formed by the gamma and epsilon chains, while a peripheral stalk is formed by the delta and b chains.</text>
</comment>
<comment type="subcellular location">
    <subcellularLocation>
        <location evidence="1">Cell membrane</location>
        <topology evidence="1">Peripheral membrane protein</topology>
    </subcellularLocation>
</comment>
<comment type="similarity">
    <text evidence="1">Belongs to the ATPase alpha/beta chains family.</text>
</comment>
<evidence type="ECO:0000255" key="1">
    <source>
        <dbReference type="HAMAP-Rule" id="MF_01347"/>
    </source>
</evidence>
<reference key="1">
    <citation type="journal article" date="2007" name="PLoS ONE">
        <title>Molecular correlates of host specialization in Staphylococcus aureus.</title>
        <authorList>
            <person name="Herron-Olson L."/>
            <person name="Fitzgerald J.R."/>
            <person name="Musser J.M."/>
            <person name="Kapur V."/>
        </authorList>
    </citation>
    <scope>NUCLEOTIDE SEQUENCE [LARGE SCALE GENOMIC DNA]</scope>
    <source>
        <strain>bovine RF122 / ET3-1</strain>
    </source>
</reference>
<gene>
    <name evidence="1" type="primary">atpD</name>
    <name type="ordered locus">SAB1987c</name>
</gene>
<accession>Q2YUK1</accession>
<protein>
    <recommendedName>
        <fullName evidence="1">ATP synthase subunit beta</fullName>
        <ecNumber evidence="1">7.1.2.2</ecNumber>
    </recommendedName>
    <alternativeName>
        <fullName evidence="1">ATP synthase F1 sector subunit beta</fullName>
    </alternativeName>
    <alternativeName>
        <fullName evidence="1">F-ATPase subunit beta</fullName>
    </alternativeName>
</protein>